<accession>A6LWN6</accession>
<comment type="function">
    <text evidence="1">Catalyzes the reversible reaction in which hydroxymethyl group from 5,10-methylenetetrahydrofolate is transferred onto alpha-ketoisovalerate to form ketopantoate.</text>
</comment>
<comment type="catalytic activity">
    <reaction evidence="1">
        <text>3-methyl-2-oxobutanoate + (6R)-5,10-methylene-5,6,7,8-tetrahydrofolate + H2O = 2-dehydropantoate + (6S)-5,6,7,8-tetrahydrofolate</text>
        <dbReference type="Rhea" id="RHEA:11824"/>
        <dbReference type="ChEBI" id="CHEBI:11561"/>
        <dbReference type="ChEBI" id="CHEBI:11851"/>
        <dbReference type="ChEBI" id="CHEBI:15377"/>
        <dbReference type="ChEBI" id="CHEBI:15636"/>
        <dbReference type="ChEBI" id="CHEBI:57453"/>
        <dbReference type="EC" id="2.1.2.11"/>
    </reaction>
</comment>
<comment type="cofactor">
    <cofactor evidence="1">
        <name>Mg(2+)</name>
        <dbReference type="ChEBI" id="CHEBI:18420"/>
    </cofactor>
    <text evidence="1">Binds 1 Mg(2+) ion per subunit.</text>
</comment>
<comment type="pathway">
    <text evidence="1">Cofactor biosynthesis; (R)-pantothenate biosynthesis; (R)-pantoate from 3-methyl-2-oxobutanoate: step 1/2.</text>
</comment>
<comment type="subunit">
    <text evidence="1">Homodecamer; pentamer of dimers.</text>
</comment>
<comment type="subcellular location">
    <subcellularLocation>
        <location evidence="1">Cytoplasm</location>
    </subcellularLocation>
</comment>
<comment type="similarity">
    <text evidence="1">Belongs to the PanB family.</text>
</comment>
<feature type="chain" id="PRO_1000076821" description="3-methyl-2-oxobutanoate hydroxymethyltransferase">
    <location>
        <begin position="1"/>
        <end position="275"/>
    </location>
</feature>
<feature type="active site" description="Proton acceptor" evidence="1">
    <location>
        <position position="182"/>
    </location>
</feature>
<feature type="binding site" evidence="1">
    <location>
        <begin position="44"/>
        <end position="45"/>
    </location>
    <ligand>
        <name>3-methyl-2-oxobutanoate</name>
        <dbReference type="ChEBI" id="CHEBI:11851"/>
    </ligand>
</feature>
<feature type="binding site" evidence="1">
    <location>
        <position position="44"/>
    </location>
    <ligand>
        <name>Mg(2+)</name>
        <dbReference type="ChEBI" id="CHEBI:18420"/>
    </ligand>
</feature>
<feature type="binding site" evidence="1">
    <location>
        <position position="83"/>
    </location>
    <ligand>
        <name>3-methyl-2-oxobutanoate</name>
        <dbReference type="ChEBI" id="CHEBI:11851"/>
    </ligand>
</feature>
<feature type="binding site" evidence="1">
    <location>
        <position position="83"/>
    </location>
    <ligand>
        <name>Mg(2+)</name>
        <dbReference type="ChEBI" id="CHEBI:18420"/>
    </ligand>
</feature>
<feature type="binding site" evidence="1">
    <location>
        <position position="113"/>
    </location>
    <ligand>
        <name>3-methyl-2-oxobutanoate</name>
        <dbReference type="ChEBI" id="CHEBI:11851"/>
    </ligand>
</feature>
<feature type="binding site" evidence="1">
    <location>
        <position position="115"/>
    </location>
    <ligand>
        <name>Mg(2+)</name>
        <dbReference type="ChEBI" id="CHEBI:18420"/>
    </ligand>
</feature>
<evidence type="ECO:0000255" key="1">
    <source>
        <dbReference type="HAMAP-Rule" id="MF_00156"/>
    </source>
</evidence>
<sequence>MKNTVLTFKQAKEEKRRLSMLTAYDYSMAKIIDESGVNGILIGDSLGMVIKGEDDTLAVTMDEIIYHTKAVKKGAKNALIVSDMPFLSYHVSIEQAVLNAGRLIKEGGANAVKLEGGANVAAQIKAIVDAQIPVMGHIGLTPQSVNAFGGFKVQGKSESAAKQLIDDAVLIEKAGAFSIVLEGIPEKVAELITNAVSIPTIGIGAGKYCDGQILVYQDMLGMFNDFVPKFVKQYANVGNVMREAISSYVKEVQAGDFPEEKHTFKIDENELKKLY</sequence>
<organism>
    <name type="scientific">Clostridium beijerinckii (strain ATCC 51743 / NCIMB 8052)</name>
    <name type="common">Clostridium acetobutylicum</name>
    <dbReference type="NCBI Taxonomy" id="290402"/>
    <lineage>
        <taxon>Bacteria</taxon>
        <taxon>Bacillati</taxon>
        <taxon>Bacillota</taxon>
        <taxon>Clostridia</taxon>
        <taxon>Eubacteriales</taxon>
        <taxon>Clostridiaceae</taxon>
        <taxon>Clostridium</taxon>
    </lineage>
</organism>
<reference key="1">
    <citation type="submission" date="2007-06" db="EMBL/GenBank/DDBJ databases">
        <title>Complete sequence of Clostridium beijerinckii NCIMB 8052.</title>
        <authorList>
            <consortium name="US DOE Joint Genome Institute"/>
            <person name="Copeland A."/>
            <person name="Lucas S."/>
            <person name="Lapidus A."/>
            <person name="Barry K."/>
            <person name="Detter J.C."/>
            <person name="Glavina del Rio T."/>
            <person name="Hammon N."/>
            <person name="Israni S."/>
            <person name="Dalin E."/>
            <person name="Tice H."/>
            <person name="Pitluck S."/>
            <person name="Sims D."/>
            <person name="Brettin T."/>
            <person name="Bruce D."/>
            <person name="Tapia R."/>
            <person name="Brainard J."/>
            <person name="Schmutz J."/>
            <person name="Larimer F."/>
            <person name="Land M."/>
            <person name="Hauser L."/>
            <person name="Kyrpides N."/>
            <person name="Mikhailova N."/>
            <person name="Bennet G."/>
            <person name="Cann I."/>
            <person name="Chen J.-S."/>
            <person name="Contreras A.L."/>
            <person name="Jones D."/>
            <person name="Kashket E."/>
            <person name="Mitchell W."/>
            <person name="Stoddard S."/>
            <person name="Schwarz W."/>
            <person name="Qureshi N."/>
            <person name="Young M."/>
            <person name="Shi Z."/>
            <person name="Ezeji T."/>
            <person name="White B."/>
            <person name="Blaschek H."/>
            <person name="Richardson P."/>
        </authorList>
    </citation>
    <scope>NUCLEOTIDE SEQUENCE [LARGE SCALE GENOMIC DNA]</scope>
    <source>
        <strain>ATCC 51743 / NCIMB 8052</strain>
    </source>
</reference>
<proteinExistence type="inferred from homology"/>
<protein>
    <recommendedName>
        <fullName evidence="1">3-methyl-2-oxobutanoate hydroxymethyltransferase</fullName>
        <ecNumber evidence="1">2.1.2.11</ecNumber>
    </recommendedName>
    <alternativeName>
        <fullName evidence="1">Ketopantoate hydroxymethyltransferase</fullName>
        <shortName evidence="1">KPHMT</shortName>
    </alternativeName>
</protein>
<name>PANB_CLOB8</name>
<keyword id="KW-0963">Cytoplasm</keyword>
<keyword id="KW-0460">Magnesium</keyword>
<keyword id="KW-0479">Metal-binding</keyword>
<keyword id="KW-0566">Pantothenate biosynthesis</keyword>
<keyword id="KW-0808">Transferase</keyword>
<gene>
    <name evidence="1" type="primary">panB</name>
    <name type="ordered locus">Cbei_2610</name>
</gene>
<dbReference type="EC" id="2.1.2.11" evidence="1"/>
<dbReference type="EMBL" id="CP000721">
    <property type="protein sequence ID" value="ABR34766.1"/>
    <property type="molecule type" value="Genomic_DNA"/>
</dbReference>
<dbReference type="RefSeq" id="WP_012058821.1">
    <property type="nucleotide sequence ID" value="NC_009617.1"/>
</dbReference>
<dbReference type="SMR" id="A6LWN6"/>
<dbReference type="KEGG" id="cbe:Cbei_2610"/>
<dbReference type="eggNOG" id="COG0413">
    <property type="taxonomic scope" value="Bacteria"/>
</dbReference>
<dbReference type="HOGENOM" id="CLU_036645_1_0_9"/>
<dbReference type="UniPathway" id="UPA00028">
    <property type="reaction ID" value="UER00003"/>
</dbReference>
<dbReference type="Proteomes" id="UP000000565">
    <property type="component" value="Chromosome"/>
</dbReference>
<dbReference type="GO" id="GO:0005737">
    <property type="term" value="C:cytoplasm"/>
    <property type="evidence" value="ECO:0007669"/>
    <property type="project" value="UniProtKB-SubCell"/>
</dbReference>
<dbReference type="GO" id="GO:0003864">
    <property type="term" value="F:3-methyl-2-oxobutanoate hydroxymethyltransferase activity"/>
    <property type="evidence" value="ECO:0007669"/>
    <property type="project" value="UniProtKB-UniRule"/>
</dbReference>
<dbReference type="GO" id="GO:0000287">
    <property type="term" value="F:magnesium ion binding"/>
    <property type="evidence" value="ECO:0007669"/>
    <property type="project" value="TreeGrafter"/>
</dbReference>
<dbReference type="GO" id="GO:0015940">
    <property type="term" value="P:pantothenate biosynthetic process"/>
    <property type="evidence" value="ECO:0007669"/>
    <property type="project" value="UniProtKB-UniRule"/>
</dbReference>
<dbReference type="CDD" id="cd06557">
    <property type="entry name" value="KPHMT-like"/>
    <property type="match status" value="1"/>
</dbReference>
<dbReference type="FunFam" id="3.20.20.60:FF:000003">
    <property type="entry name" value="3-methyl-2-oxobutanoate hydroxymethyltransferase"/>
    <property type="match status" value="1"/>
</dbReference>
<dbReference type="Gene3D" id="3.20.20.60">
    <property type="entry name" value="Phosphoenolpyruvate-binding domains"/>
    <property type="match status" value="1"/>
</dbReference>
<dbReference type="HAMAP" id="MF_00156">
    <property type="entry name" value="PanB"/>
    <property type="match status" value="1"/>
</dbReference>
<dbReference type="InterPro" id="IPR003700">
    <property type="entry name" value="Pantoate_hydroxy_MeTrfase"/>
</dbReference>
<dbReference type="InterPro" id="IPR015813">
    <property type="entry name" value="Pyrv/PenolPyrv_kinase-like_dom"/>
</dbReference>
<dbReference type="InterPro" id="IPR040442">
    <property type="entry name" value="Pyrv_kinase-like_dom_sf"/>
</dbReference>
<dbReference type="NCBIfam" id="TIGR00222">
    <property type="entry name" value="panB"/>
    <property type="match status" value="1"/>
</dbReference>
<dbReference type="NCBIfam" id="NF001452">
    <property type="entry name" value="PRK00311.1"/>
    <property type="match status" value="1"/>
</dbReference>
<dbReference type="PANTHER" id="PTHR20881">
    <property type="entry name" value="3-METHYL-2-OXOBUTANOATE HYDROXYMETHYLTRANSFERASE"/>
    <property type="match status" value="1"/>
</dbReference>
<dbReference type="PANTHER" id="PTHR20881:SF0">
    <property type="entry name" value="3-METHYL-2-OXOBUTANOATE HYDROXYMETHYLTRANSFERASE"/>
    <property type="match status" value="1"/>
</dbReference>
<dbReference type="Pfam" id="PF02548">
    <property type="entry name" value="Pantoate_transf"/>
    <property type="match status" value="1"/>
</dbReference>
<dbReference type="PIRSF" id="PIRSF000388">
    <property type="entry name" value="Pantoate_hydroxy_MeTrfase"/>
    <property type="match status" value="1"/>
</dbReference>
<dbReference type="SUPFAM" id="SSF51621">
    <property type="entry name" value="Phosphoenolpyruvate/pyruvate domain"/>
    <property type="match status" value="1"/>
</dbReference>